<dbReference type="EC" id="2.4.1.135" evidence="2"/>
<dbReference type="EMBL" id="BC002103">
    <property type="protein sequence ID" value="AAH02103.1"/>
    <property type="molecule type" value="mRNA"/>
</dbReference>
<dbReference type="EMBL" id="BC004038">
    <property type="protein sequence ID" value="AAH04038.1"/>
    <property type="molecule type" value="mRNA"/>
</dbReference>
<dbReference type="EMBL" id="BC012930">
    <property type="protein sequence ID" value="AAH12930.1"/>
    <property type="molecule type" value="mRNA"/>
</dbReference>
<dbReference type="CCDS" id="CCDS29558.1"/>
<dbReference type="RefSeq" id="NP_077218.1">
    <property type="nucleotide sequence ID" value="NM_024256.2"/>
</dbReference>
<dbReference type="SMR" id="P58158"/>
<dbReference type="FunCoup" id="P58158">
    <property type="interactions" value="2250"/>
</dbReference>
<dbReference type="STRING" id="10090.ENSMUSP00000093962"/>
<dbReference type="CAZy" id="GT43">
    <property type="family name" value="Glycosyltransferase Family 43"/>
</dbReference>
<dbReference type="GlyCosmos" id="P58158">
    <property type="glycosylation" value="1 site, No reported glycans"/>
</dbReference>
<dbReference type="GlyGen" id="P58158">
    <property type="glycosylation" value="1 site, 1 N-linked glycan (1 site)"/>
</dbReference>
<dbReference type="PhosphoSitePlus" id="P58158"/>
<dbReference type="SwissPalm" id="P58158"/>
<dbReference type="PaxDb" id="10090-ENSMUSP00000093962"/>
<dbReference type="PeptideAtlas" id="P58158"/>
<dbReference type="ProteomicsDB" id="277144"/>
<dbReference type="Pumba" id="P58158"/>
<dbReference type="Antibodypedia" id="28557">
    <property type="antibodies" value="135 antibodies from 19 providers"/>
</dbReference>
<dbReference type="DNASU" id="72727"/>
<dbReference type="Ensembl" id="ENSMUST00000096243.7">
    <property type="protein sequence ID" value="ENSMUSP00000093962.6"/>
    <property type="gene ID" value="ENSMUSG00000071649.7"/>
</dbReference>
<dbReference type="GeneID" id="72727"/>
<dbReference type="KEGG" id="mmu:72727"/>
<dbReference type="UCSC" id="uc008gob.1">
    <property type="organism name" value="mouse"/>
</dbReference>
<dbReference type="AGR" id="MGI:1919977"/>
<dbReference type="CTD" id="26229"/>
<dbReference type="MGI" id="MGI:1919977">
    <property type="gene designation" value="B3gat3"/>
</dbReference>
<dbReference type="VEuPathDB" id="HostDB:ENSMUSG00000071649"/>
<dbReference type="eggNOG" id="KOG1476">
    <property type="taxonomic scope" value="Eukaryota"/>
</dbReference>
<dbReference type="GeneTree" id="ENSGT00940000156954"/>
<dbReference type="HOGENOM" id="CLU_045177_0_1_1"/>
<dbReference type="InParanoid" id="P58158"/>
<dbReference type="OMA" id="HTAWEPT"/>
<dbReference type="OrthoDB" id="675023at2759"/>
<dbReference type="PhylomeDB" id="P58158"/>
<dbReference type="TreeFam" id="TF313522"/>
<dbReference type="Reactome" id="R-MMU-1971475">
    <property type="pathway name" value="A tetrasaccharide linker sequence is required for GAG synthesis"/>
</dbReference>
<dbReference type="UniPathway" id="UPA00378"/>
<dbReference type="BioGRID-ORCS" id="72727">
    <property type="hits" value="7 hits in 83 CRISPR screens"/>
</dbReference>
<dbReference type="ChiTaRS" id="B3gat3">
    <property type="organism name" value="mouse"/>
</dbReference>
<dbReference type="PRO" id="PR:P58158"/>
<dbReference type="Proteomes" id="UP000000589">
    <property type="component" value="Chromosome 19"/>
</dbReference>
<dbReference type="RNAct" id="P58158">
    <property type="molecule type" value="protein"/>
</dbReference>
<dbReference type="Bgee" id="ENSMUSG00000071649">
    <property type="expression patterns" value="Expressed in superior frontal gyrus and 257 other cell types or tissues"/>
</dbReference>
<dbReference type="ExpressionAtlas" id="P58158">
    <property type="expression patterns" value="baseline and differential"/>
</dbReference>
<dbReference type="GO" id="GO:0005801">
    <property type="term" value="C:cis-Golgi network"/>
    <property type="evidence" value="ECO:0000250"/>
    <property type="project" value="UniProtKB"/>
</dbReference>
<dbReference type="GO" id="GO:0005794">
    <property type="term" value="C:Golgi apparatus"/>
    <property type="evidence" value="ECO:0000266"/>
    <property type="project" value="MGI"/>
</dbReference>
<dbReference type="GO" id="GO:0000139">
    <property type="term" value="C:Golgi membrane"/>
    <property type="evidence" value="ECO:0007669"/>
    <property type="project" value="UniProtKB-SubCell"/>
</dbReference>
<dbReference type="GO" id="GO:0015018">
    <property type="term" value="F:galactosylgalactosylxylosylprotein 3-beta-glucuronosyltransferase activity"/>
    <property type="evidence" value="ECO:0000266"/>
    <property type="project" value="MGI"/>
</dbReference>
<dbReference type="GO" id="GO:0015020">
    <property type="term" value="F:glucuronosyltransferase activity"/>
    <property type="evidence" value="ECO:0000250"/>
    <property type="project" value="UniProtKB"/>
</dbReference>
<dbReference type="GO" id="GO:0046872">
    <property type="term" value="F:metal ion binding"/>
    <property type="evidence" value="ECO:0007669"/>
    <property type="project" value="UniProtKB-KW"/>
</dbReference>
<dbReference type="GO" id="GO:0072542">
    <property type="term" value="F:protein phosphatase activator activity"/>
    <property type="evidence" value="ECO:0000250"/>
    <property type="project" value="UniProtKB"/>
</dbReference>
<dbReference type="GO" id="GO:0050650">
    <property type="term" value="P:chondroitin sulfate proteoglycan biosynthetic process"/>
    <property type="evidence" value="ECO:0000250"/>
    <property type="project" value="UniProtKB"/>
</dbReference>
<dbReference type="GO" id="GO:0050651">
    <property type="term" value="P:dermatan sulfate proteoglycan biosynthetic process"/>
    <property type="evidence" value="ECO:0000250"/>
    <property type="project" value="UniProtKB"/>
</dbReference>
<dbReference type="GO" id="GO:0006024">
    <property type="term" value="P:glycosaminoglycan biosynthetic process"/>
    <property type="evidence" value="ECO:0000314"/>
    <property type="project" value="MGI"/>
</dbReference>
<dbReference type="GO" id="GO:0015012">
    <property type="term" value="P:heparan sulfate proteoglycan biosynthetic process"/>
    <property type="evidence" value="ECO:0000250"/>
    <property type="project" value="UniProtKB"/>
</dbReference>
<dbReference type="GO" id="GO:0043085">
    <property type="term" value="P:positive regulation of catalytic activity"/>
    <property type="evidence" value="ECO:0000250"/>
    <property type="project" value="UniProtKB"/>
</dbReference>
<dbReference type="GO" id="GO:0090316">
    <property type="term" value="P:positive regulation of intracellular protein transport"/>
    <property type="evidence" value="ECO:0000250"/>
    <property type="project" value="UniProtKB"/>
</dbReference>
<dbReference type="GO" id="GO:0006486">
    <property type="term" value="P:protein glycosylation"/>
    <property type="evidence" value="ECO:0007669"/>
    <property type="project" value="UniProtKB-UniPathway"/>
</dbReference>
<dbReference type="CDD" id="cd00218">
    <property type="entry name" value="GlcAT-I"/>
    <property type="match status" value="1"/>
</dbReference>
<dbReference type="FunFam" id="3.90.550.10:FF:000044">
    <property type="entry name" value="Galactosylgalactosylxylosylprotein 3-beta-glucuronosyltransferase"/>
    <property type="match status" value="1"/>
</dbReference>
<dbReference type="Gene3D" id="3.90.550.10">
    <property type="entry name" value="Spore Coat Polysaccharide Biosynthesis Protein SpsA, Chain A"/>
    <property type="match status" value="1"/>
</dbReference>
<dbReference type="InterPro" id="IPR005027">
    <property type="entry name" value="Glyco_trans_43"/>
</dbReference>
<dbReference type="InterPro" id="IPR029044">
    <property type="entry name" value="Nucleotide-diphossugar_trans"/>
</dbReference>
<dbReference type="PANTHER" id="PTHR10896:SF65">
    <property type="entry name" value="GALACTOSYLGALACTOSYLXYLOSYLPROTEIN 3-BETA-GLUCURONOSYLTRANSFERASE 3"/>
    <property type="match status" value="1"/>
</dbReference>
<dbReference type="PANTHER" id="PTHR10896">
    <property type="entry name" value="GALACTOSYLGALACTOSYLXYLOSYLPROTEIN 3-BETA-GLUCURONOSYLTRANSFERASE BETA-1,3-GLUCURONYLTRANSFERASE"/>
    <property type="match status" value="1"/>
</dbReference>
<dbReference type="Pfam" id="PF03360">
    <property type="entry name" value="Glyco_transf_43"/>
    <property type="match status" value="1"/>
</dbReference>
<dbReference type="SUPFAM" id="SSF53448">
    <property type="entry name" value="Nucleotide-diphospho-sugar transferases"/>
    <property type="match status" value="1"/>
</dbReference>
<sequence length="335" mass="37067">MKLKLKNVFLAYFLVSIAGLLYALVQLGQPCDCLPPLRAAAEQLRQKDLRISQLQADLRRPPPVPAQPPEPEALPTIYVITPTYARLVQKAELVRLSQTLSLVPRLHWLLVEDAESPTPLVSGLLAASGLLFTHLAVLTPKAQRLREGEPGWVRPRGVEQRNKALDWLRGKGGAVGGEKDPPPPGTQGVVYFADDDNTYSRELFKEMRWTRGVSVWPVGLVGGLRFEGPQVQDGRVVGFHTAWEPNRPFPLDMAGFAVALPLLLAKPNAQFDATAPRGHLESSLLSHLVDPKDLEPRAANCTQVLVWHTRTEKPKMKQEEQLQRQGQGSDPAIEV</sequence>
<accession>P58158</accession>
<gene>
    <name type="primary">B3gat3</name>
</gene>
<feature type="chain" id="PRO_0000195177" description="Galactosylgalactosylxylosylprotein 3-beta-glucuronosyltransferase 3">
    <location>
        <begin position="1"/>
        <end position="335"/>
    </location>
</feature>
<feature type="topological domain" description="Cytoplasmic" evidence="3">
    <location>
        <begin position="1"/>
        <end position="7"/>
    </location>
</feature>
<feature type="transmembrane region" description="Helical; Signal-anchor for type II membrane protein" evidence="3">
    <location>
        <begin position="8"/>
        <end position="28"/>
    </location>
</feature>
<feature type="topological domain" description="Lumenal" evidence="3">
    <location>
        <begin position="29"/>
        <end position="335"/>
    </location>
</feature>
<feature type="region of interest" description="Interaction with galactose moiety of substrate glycoprotein" evidence="1">
    <location>
        <begin position="243"/>
        <end position="252"/>
    </location>
</feature>
<feature type="region of interest" description="Disordered" evidence="4">
    <location>
        <begin position="312"/>
        <end position="335"/>
    </location>
</feature>
<feature type="compositionally biased region" description="Basic and acidic residues" evidence="4">
    <location>
        <begin position="312"/>
        <end position="322"/>
    </location>
</feature>
<feature type="active site" description="Proton donor/acceptor" evidence="1">
    <location>
        <position position="281"/>
    </location>
</feature>
<feature type="binding site" evidence="1">
    <location>
        <begin position="82"/>
        <end position="84"/>
    </location>
    <ligand>
        <name>UDP-alpha-D-glucuronate</name>
        <dbReference type="ChEBI" id="CHEBI:58052"/>
    </ligand>
</feature>
<feature type="binding site" evidence="1">
    <location>
        <position position="113"/>
    </location>
    <ligand>
        <name>UDP-alpha-D-glucuronate</name>
        <dbReference type="ChEBI" id="CHEBI:58052"/>
    </ligand>
</feature>
<feature type="binding site" evidence="1">
    <location>
        <position position="156"/>
    </location>
    <ligand>
        <name>UDP-alpha-D-glucuronate</name>
        <dbReference type="ChEBI" id="CHEBI:58052"/>
    </ligand>
</feature>
<feature type="binding site" evidence="1">
    <location>
        <position position="161"/>
    </location>
    <ligand>
        <name>UDP-alpha-D-glucuronate</name>
        <dbReference type="ChEBI" id="CHEBI:58052"/>
    </ligand>
</feature>
<feature type="binding site" evidence="1">
    <location>
        <begin position="194"/>
        <end position="196"/>
    </location>
    <ligand>
        <name>UDP-alpha-D-glucuronate</name>
        <dbReference type="ChEBI" id="CHEBI:58052"/>
    </ligand>
</feature>
<feature type="binding site" evidence="1">
    <location>
        <position position="196"/>
    </location>
    <ligand>
        <name>Mn(2+)</name>
        <dbReference type="ChEBI" id="CHEBI:29035"/>
    </ligand>
</feature>
<feature type="binding site" evidence="1">
    <location>
        <begin position="308"/>
        <end position="310"/>
    </location>
    <ligand>
        <name>UDP-alpha-D-glucuronate</name>
        <dbReference type="ChEBI" id="CHEBI:58052"/>
    </ligand>
</feature>
<feature type="site" description="Interaction with galactose moiety of substrate glycoprotein" evidence="1">
    <location>
        <position position="227"/>
    </location>
</feature>
<feature type="site" description="Interaction with galactose moiety of substrate glycoprotein" evidence="1">
    <location>
        <position position="318"/>
    </location>
</feature>
<feature type="glycosylation site" description="N-linked (GlcNAc...) asparagine" evidence="3">
    <location>
        <position position="300"/>
    </location>
</feature>
<feature type="disulfide bond" description="Interchain" evidence="1">
    <location>
        <position position="33"/>
    </location>
</feature>
<evidence type="ECO:0000250" key="1"/>
<evidence type="ECO:0000250" key="2">
    <source>
        <dbReference type="UniProtKB" id="O94766"/>
    </source>
</evidence>
<evidence type="ECO:0000255" key="3"/>
<evidence type="ECO:0000256" key="4">
    <source>
        <dbReference type="SAM" id="MobiDB-lite"/>
    </source>
</evidence>
<evidence type="ECO:0000269" key="5">
    <source>
    </source>
</evidence>
<evidence type="ECO:0000305" key="6"/>
<reference key="1">
    <citation type="journal article" date="2004" name="Genome Res.">
        <title>The status, quality, and expansion of the NIH full-length cDNA project: the Mammalian Gene Collection (MGC).</title>
        <authorList>
            <consortium name="The MGC Project Team"/>
        </authorList>
    </citation>
    <scope>NUCLEOTIDE SEQUENCE [LARGE SCALE MRNA]</scope>
    <source>
        <strain>C57BL/6J</strain>
        <tissue>Eye</tissue>
        <tissue>Mammary tumor</tissue>
    </source>
</reference>
<reference key="2">
    <citation type="journal article" date="2010" name="Cell">
        <title>A tissue-specific atlas of mouse protein phosphorylation and expression.</title>
        <authorList>
            <person name="Huttlin E.L."/>
            <person name="Jedrychowski M.P."/>
            <person name="Elias J.E."/>
            <person name="Goswami T."/>
            <person name="Rad R."/>
            <person name="Beausoleil S.A."/>
            <person name="Villen J."/>
            <person name="Haas W."/>
            <person name="Sowa M.E."/>
            <person name="Gygi S.P."/>
        </authorList>
    </citation>
    <scope>IDENTIFICATION BY MASS SPECTROMETRY [LARGE SCALE ANALYSIS]</scope>
    <source>
        <tissue>Brain</tissue>
        <tissue>Kidney</tissue>
    </source>
</reference>
<reference key="3">
    <citation type="journal article" date="2011" name="Am. J. Hum. Genet.">
        <title>Faulty initiation of proteoglycan synthesis causes cardiac and joint defects.</title>
        <authorList>
            <person name="Baasanjav S."/>
            <person name="Al-Gazali L."/>
            <person name="Hashiguchi T."/>
            <person name="Mizumoto S."/>
            <person name="Fischer B."/>
            <person name="Horn D."/>
            <person name="Seelow D."/>
            <person name="Ali B.R."/>
            <person name="Aziz S.A."/>
            <person name="Langer R."/>
            <person name="Saleh A.A."/>
            <person name="Becker C."/>
            <person name="Nurnberg G."/>
            <person name="Cantagrel V."/>
            <person name="Gleeson J.G."/>
            <person name="Gomez D."/>
            <person name="Michel J.B."/>
            <person name="Stricker S."/>
            <person name="Lindner T.H."/>
            <person name="Nurnberg P."/>
            <person name="Sugahara K."/>
            <person name="Mundlos S."/>
            <person name="Hoffmann K."/>
        </authorList>
    </citation>
    <scope>TISSUE SPECIFICITY</scope>
</reference>
<protein>
    <recommendedName>
        <fullName>Galactosylgalactosylxylosylprotein 3-beta-glucuronosyltransferase 3</fullName>
        <ecNumber evidence="2">2.4.1.135</ecNumber>
    </recommendedName>
    <alternativeName>
        <fullName>Beta-1,3-glucuronyltransferase 3</fullName>
    </alternativeName>
    <alternativeName>
        <fullName>Glucuronosyltransferase I</fullName>
        <shortName>GlcAT-I</shortName>
    </alternativeName>
    <alternativeName>
        <fullName>UDP-GlcUA:Gal beta-1,3-Gal-R glucuronyltransferase</fullName>
        <shortName>GlcUAT-I</shortName>
    </alternativeName>
</protein>
<proteinExistence type="evidence at protein level"/>
<name>B3GA3_MOUSE</name>
<comment type="function">
    <text evidence="2">Glycosaminoglycans biosynthesis. Involved in forming the linkage tetrasaccharide present in heparan sulfate and chondroitin sulfate. Transfers a glucuronic acid moiety from the uridine diphosphate-glucuronic acid (UDP-GlcUA) to the common linkage region trisaccharide Gal-beta-1,3-Gal-beta-1,4-Xyl covalently bound to a Ser residue at the glycosaminylglycan attachment site of proteoglycans. Can also play a role in the biosynthesis of l2/HNK-1 carbohydrate epitope on glycoproteins. Stimulates 2-phosphoxylose phosphatase activity of PXYLP1 in presence of uridine diphosphate-glucuronic acid (UDP-GlcUA) during completion of linkage region formation.</text>
</comment>
<comment type="catalytic activity">
    <reaction evidence="2">
        <text>3-O-(beta-D-galactosyl-(1-&gt;3)-beta-D-galactosyl-(1-&gt;4)-beta-D-xylosyl)-L-seryl-[protein] + UDP-alpha-D-glucuronate = 3-O-(beta-D-GlcA-(1-&gt;3)-beta-D-Gal-(1-&gt;3)-beta-D-Gal-(1-&gt;4)-beta-D-Xyl)-L-seryl-[protein] + UDP + H(+)</text>
        <dbReference type="Rhea" id="RHEA:24168"/>
        <dbReference type="Rhea" id="RHEA-COMP:12571"/>
        <dbReference type="Rhea" id="RHEA-COMP:12573"/>
        <dbReference type="ChEBI" id="CHEBI:15378"/>
        <dbReference type="ChEBI" id="CHEBI:58052"/>
        <dbReference type="ChEBI" id="CHEBI:58223"/>
        <dbReference type="ChEBI" id="CHEBI:132090"/>
        <dbReference type="ChEBI" id="CHEBI:132093"/>
        <dbReference type="EC" id="2.4.1.135"/>
    </reaction>
</comment>
<comment type="cofactor">
    <cofactor evidence="1">
        <name>Mn(2+)</name>
        <dbReference type="ChEBI" id="CHEBI:29035"/>
    </cofactor>
</comment>
<comment type="pathway">
    <text>Protein modification; protein glycosylation.</text>
</comment>
<comment type="subunit">
    <text evidence="2">Homodimer; disulfide-linked. Interacts with PXYLP1; the interaction increases the 2-phosphoxylose phosphatase activity of PXYLP1 during completion of linkage region formation in a B3GAT3-mediated manner.</text>
</comment>
<comment type="subcellular location">
    <subcellularLocation>
        <location evidence="2">Golgi apparatus membrane</location>
        <topology evidence="2">Single-pass type II membrane protein</topology>
    </subcellularLocation>
    <subcellularLocation>
        <location evidence="2">Golgi apparatus</location>
        <location evidence="2">cis-Golgi network</location>
    </subcellularLocation>
</comment>
<comment type="tissue specificity">
    <text evidence="5">Expressed in heart, aorta, bone, and also in osteoblasts.</text>
</comment>
<comment type="PTM">
    <text evidence="1">N-glycosylated.</text>
</comment>
<comment type="similarity">
    <text evidence="6">Belongs to the glycosyltransferase 43 family.</text>
</comment>
<keyword id="KW-1015">Disulfide bond</keyword>
<keyword id="KW-0325">Glycoprotein</keyword>
<keyword id="KW-0333">Golgi apparatus</keyword>
<keyword id="KW-0464">Manganese</keyword>
<keyword id="KW-0472">Membrane</keyword>
<keyword id="KW-0479">Metal-binding</keyword>
<keyword id="KW-1185">Reference proteome</keyword>
<keyword id="KW-0735">Signal-anchor</keyword>
<keyword id="KW-0808">Transferase</keyword>
<keyword id="KW-0812">Transmembrane</keyword>
<keyword id="KW-1133">Transmembrane helix</keyword>
<organism>
    <name type="scientific">Mus musculus</name>
    <name type="common">Mouse</name>
    <dbReference type="NCBI Taxonomy" id="10090"/>
    <lineage>
        <taxon>Eukaryota</taxon>
        <taxon>Metazoa</taxon>
        <taxon>Chordata</taxon>
        <taxon>Craniata</taxon>
        <taxon>Vertebrata</taxon>
        <taxon>Euteleostomi</taxon>
        <taxon>Mammalia</taxon>
        <taxon>Eutheria</taxon>
        <taxon>Euarchontoglires</taxon>
        <taxon>Glires</taxon>
        <taxon>Rodentia</taxon>
        <taxon>Myomorpha</taxon>
        <taxon>Muroidea</taxon>
        <taxon>Muridae</taxon>
        <taxon>Murinae</taxon>
        <taxon>Mus</taxon>
        <taxon>Mus</taxon>
    </lineage>
</organism>